<keyword id="KW-0687">Ribonucleoprotein</keyword>
<keyword id="KW-0689">Ribosomal protein</keyword>
<evidence type="ECO:0000255" key="1">
    <source>
        <dbReference type="HAMAP-Rule" id="MF_00410"/>
    </source>
</evidence>
<evidence type="ECO:0000305" key="2"/>
<sequence length="92" mass="11011">MSESGGMVKSVHVIPLKRVYFGRRMNRADRAIRLVRKYVARHFKDAEKIILDPELNKYIWSCGREKPPRRVVVEIRFNKNEKEARVFLKRVK</sequence>
<reference key="1">
    <citation type="journal article" date="2009" name="J. Bacteriol.">
        <title>Complete genome sequence of the anaerobic, protein-degrading hyperthermophilic crenarchaeon Desulfurococcus kamchatkensis.</title>
        <authorList>
            <person name="Ravin N.V."/>
            <person name="Mardanov A.V."/>
            <person name="Beletsky A.V."/>
            <person name="Kublanov I.V."/>
            <person name="Kolganova T.V."/>
            <person name="Lebedinsky A.V."/>
            <person name="Chernyh N.A."/>
            <person name="Bonch-Osmolovskaya E.A."/>
            <person name="Skryabin K.G."/>
        </authorList>
    </citation>
    <scope>NUCLEOTIDE SEQUENCE [LARGE SCALE GENOMIC DNA]</scope>
    <source>
        <strain>DSM 18924 / JCM 16383 / VKM B-2413 / 1221n</strain>
    </source>
</reference>
<comment type="similarity">
    <text evidence="1">Belongs to the eukaryotic ribosomal protein eL31 family.</text>
</comment>
<accession>B8D5Q6</accession>
<proteinExistence type="inferred from homology"/>
<dbReference type="EMBL" id="CP001140">
    <property type="protein sequence ID" value="ACL11437.1"/>
    <property type="molecule type" value="Genomic_DNA"/>
</dbReference>
<dbReference type="RefSeq" id="WP_012608778.1">
    <property type="nucleotide sequence ID" value="NC_011766.1"/>
</dbReference>
<dbReference type="SMR" id="B8D5Q6"/>
<dbReference type="STRING" id="490899.DKAM_1111"/>
<dbReference type="GeneID" id="7171207"/>
<dbReference type="KEGG" id="dka:DKAM_1111"/>
<dbReference type="eggNOG" id="arCOG04473">
    <property type="taxonomic scope" value="Archaea"/>
</dbReference>
<dbReference type="HOGENOM" id="CLU_112570_3_1_2"/>
<dbReference type="Proteomes" id="UP000006903">
    <property type="component" value="Chromosome"/>
</dbReference>
<dbReference type="GO" id="GO:1990904">
    <property type="term" value="C:ribonucleoprotein complex"/>
    <property type="evidence" value="ECO:0007669"/>
    <property type="project" value="UniProtKB-KW"/>
</dbReference>
<dbReference type="GO" id="GO:0005840">
    <property type="term" value="C:ribosome"/>
    <property type="evidence" value="ECO:0007669"/>
    <property type="project" value="UniProtKB-KW"/>
</dbReference>
<dbReference type="GO" id="GO:0003735">
    <property type="term" value="F:structural constituent of ribosome"/>
    <property type="evidence" value="ECO:0007669"/>
    <property type="project" value="InterPro"/>
</dbReference>
<dbReference type="GO" id="GO:0006412">
    <property type="term" value="P:translation"/>
    <property type="evidence" value="ECO:0007669"/>
    <property type="project" value="UniProtKB-UniRule"/>
</dbReference>
<dbReference type="CDD" id="cd00463">
    <property type="entry name" value="Ribosomal_L31e"/>
    <property type="match status" value="1"/>
</dbReference>
<dbReference type="Gene3D" id="3.10.440.10">
    <property type="match status" value="1"/>
</dbReference>
<dbReference type="HAMAP" id="MF_00410">
    <property type="entry name" value="Ribosomal_eL31"/>
    <property type="match status" value="1"/>
</dbReference>
<dbReference type="InterPro" id="IPR000054">
    <property type="entry name" value="Ribosomal_eL31"/>
</dbReference>
<dbReference type="InterPro" id="IPR023621">
    <property type="entry name" value="Ribosomal_eL31_dom_sf"/>
</dbReference>
<dbReference type="NCBIfam" id="NF002258">
    <property type="entry name" value="PRK01192.1-1"/>
    <property type="match status" value="1"/>
</dbReference>
<dbReference type="Pfam" id="PF01198">
    <property type="entry name" value="Ribosomal_L31e"/>
    <property type="match status" value="1"/>
</dbReference>
<dbReference type="SMART" id="SM01380">
    <property type="entry name" value="Ribosomal_L31e"/>
    <property type="match status" value="1"/>
</dbReference>
<dbReference type="SUPFAM" id="SSF54575">
    <property type="entry name" value="Ribosomal protein L31e"/>
    <property type="match status" value="1"/>
</dbReference>
<gene>
    <name evidence="1" type="primary">rpl31e</name>
    <name type="ordered locus">DKAM_1111</name>
</gene>
<feature type="chain" id="PRO_1000134756" description="Large ribosomal subunit protein eL31">
    <location>
        <begin position="1"/>
        <end position="92"/>
    </location>
</feature>
<protein>
    <recommendedName>
        <fullName evidence="1">Large ribosomal subunit protein eL31</fullName>
    </recommendedName>
    <alternativeName>
        <fullName evidence="2">50S ribosomal protein L31e</fullName>
    </alternativeName>
</protein>
<organism>
    <name type="scientific">Desulfurococcus amylolyticus (strain DSM 18924 / JCM 16383 / VKM B-2413 / 1221n)</name>
    <name type="common">Desulfurococcus kamchatkensis</name>
    <dbReference type="NCBI Taxonomy" id="490899"/>
    <lineage>
        <taxon>Archaea</taxon>
        <taxon>Thermoproteota</taxon>
        <taxon>Thermoprotei</taxon>
        <taxon>Desulfurococcales</taxon>
        <taxon>Desulfurococcaceae</taxon>
        <taxon>Desulfurococcus</taxon>
    </lineage>
</organism>
<name>RL31_DESA1</name>